<organism>
    <name type="scientific">Malacoplasma penetrans (strain HF-2)</name>
    <name type="common">Mycoplasma penetrans</name>
    <dbReference type="NCBI Taxonomy" id="272633"/>
    <lineage>
        <taxon>Bacteria</taxon>
        <taxon>Bacillati</taxon>
        <taxon>Mycoplasmatota</taxon>
        <taxon>Mycoplasmoidales</taxon>
        <taxon>Mycoplasmoidaceae</taxon>
        <taxon>Malacoplasma</taxon>
    </lineage>
</organism>
<accession>Q8EUR6</accession>
<reference key="1">
    <citation type="journal article" date="2002" name="Nucleic Acids Res.">
        <title>The complete genomic sequence of Mycoplasma penetrans, an intracellular bacterial pathogen in humans.</title>
        <authorList>
            <person name="Sasaki Y."/>
            <person name="Ishikawa J."/>
            <person name="Yamashita A."/>
            <person name="Oshima K."/>
            <person name="Kenri T."/>
            <person name="Furuya K."/>
            <person name="Yoshino C."/>
            <person name="Horino A."/>
            <person name="Shiba T."/>
            <person name="Sasaki T."/>
            <person name="Hattori M."/>
        </authorList>
    </citation>
    <scope>NUCLEOTIDE SEQUENCE [LARGE SCALE GENOMIC DNA]</scope>
    <source>
        <strain>HF-2</strain>
    </source>
</reference>
<proteinExistence type="inferred from homology"/>
<gene>
    <name evidence="1" type="primary">alaS</name>
    <name type="ordered locus">MYPE8540</name>
</gene>
<evidence type="ECO:0000255" key="1">
    <source>
        <dbReference type="HAMAP-Rule" id="MF_00036"/>
    </source>
</evidence>
<sequence length="930" mass="107360">MSKKLTTNEIRKLWLDFFKSKNHTEVESKSLIPKNDDSLLWINSGVATLKTFFSGKENPPSKRLTNSQRCLRTNDIENVGLTSRHHTFFEMLGNFSIGDYFRKEAIEFGAELVFKVFKLDPKKIYITVYEEDQESFDLWVKNGAIKSHILKCDKSRNFWEIGSGPCGPCTEIYYDRGEKYDFQKLGEKLFFEDIENDRYIEIWNIVFSEFNNDGKNNYTKLARQNIDTGAGLERLACILQDVPTNYDTDAFVNVRSVIEKYSNKKYDNNLYFESKKDSEKVFINKCFSVIIDHFKAVIFAISDGALPSNKDRGYILRKLLRRSFLYLNYLKVSFENSKEIINTIISNNETYYPYLKENLNNVINTIKLEYDLYCESINNSFKKLNELLNKKLLDASDLFNLVTTYGFPIEIVQSLQELLTQSKDAKNLKLAEDIINSINPSDKKISISKLKIEFDEFEKLFDEHRLIANANASVKGMENQNEELLNLPTLDSSFDYEIESVKNSKVLKIFDENWKPVEEIKNKDCWVILDKTCFFATTGGQEHDTGKINKFDVVDVIKSPQGYHLHKVVKGTFKIGEKVDGQINSFDRNIIRKQHSSEHLMHSALKRVVSPTIKQEGAFKSIEKITLDFSFNRKLTYKEILGVEKEVKRIIATKNPTQVLMKTLDEAKEMGAIGYFEQVYKKISGKLRVLYLCPESIEICGGTHVYNTGDIEDFMVTGLTSKGSGSWRIEAVSSNYLVDKFKNNVIKKAIDDFNNYFKKYKELNIKDDEVEKYKKTDINSIHYLELKEINEILKNKINTLVIRKEKENLSKESNEIKNKFTEVKESTKLFLLKDIDRKLLFNSLVLAINEAKSTVFLVINEVDGVIQYVLCSNESFAKNNNLDFNLYAKDLNAKLGGKGGGRSYLVQGTILKIDEKELNKILDTINAKLK</sequence>
<dbReference type="EC" id="6.1.1.7" evidence="1"/>
<dbReference type="EMBL" id="BA000026">
    <property type="protein sequence ID" value="BAC44646.1"/>
    <property type="molecule type" value="Genomic_DNA"/>
</dbReference>
<dbReference type="RefSeq" id="WP_011077675.1">
    <property type="nucleotide sequence ID" value="NC_004432.1"/>
</dbReference>
<dbReference type="SMR" id="Q8EUR6"/>
<dbReference type="FunCoup" id="Q8EUR6">
    <property type="interactions" value="260"/>
</dbReference>
<dbReference type="STRING" id="272633.gene:10731976"/>
<dbReference type="KEGG" id="mpe:MYPE8540"/>
<dbReference type="eggNOG" id="COG0013">
    <property type="taxonomic scope" value="Bacteria"/>
</dbReference>
<dbReference type="HOGENOM" id="CLU_004485_1_1_14"/>
<dbReference type="InParanoid" id="Q8EUR6"/>
<dbReference type="Proteomes" id="UP000002522">
    <property type="component" value="Chromosome"/>
</dbReference>
<dbReference type="GO" id="GO:0005829">
    <property type="term" value="C:cytosol"/>
    <property type="evidence" value="ECO:0007669"/>
    <property type="project" value="TreeGrafter"/>
</dbReference>
<dbReference type="GO" id="GO:0004813">
    <property type="term" value="F:alanine-tRNA ligase activity"/>
    <property type="evidence" value="ECO:0007669"/>
    <property type="project" value="UniProtKB-UniRule"/>
</dbReference>
<dbReference type="GO" id="GO:0002161">
    <property type="term" value="F:aminoacyl-tRNA deacylase activity"/>
    <property type="evidence" value="ECO:0007669"/>
    <property type="project" value="TreeGrafter"/>
</dbReference>
<dbReference type="GO" id="GO:0005524">
    <property type="term" value="F:ATP binding"/>
    <property type="evidence" value="ECO:0007669"/>
    <property type="project" value="UniProtKB-UniRule"/>
</dbReference>
<dbReference type="GO" id="GO:0000049">
    <property type="term" value="F:tRNA binding"/>
    <property type="evidence" value="ECO:0007669"/>
    <property type="project" value="UniProtKB-KW"/>
</dbReference>
<dbReference type="GO" id="GO:0008270">
    <property type="term" value="F:zinc ion binding"/>
    <property type="evidence" value="ECO:0007669"/>
    <property type="project" value="UniProtKB-UniRule"/>
</dbReference>
<dbReference type="GO" id="GO:0006419">
    <property type="term" value="P:alanyl-tRNA aminoacylation"/>
    <property type="evidence" value="ECO:0007669"/>
    <property type="project" value="UniProtKB-UniRule"/>
</dbReference>
<dbReference type="CDD" id="cd00673">
    <property type="entry name" value="AlaRS_core"/>
    <property type="match status" value="1"/>
</dbReference>
<dbReference type="FunFam" id="3.30.930.10:FF:000046">
    <property type="entry name" value="Alanine--tRNA ligase"/>
    <property type="match status" value="1"/>
</dbReference>
<dbReference type="Gene3D" id="2.40.30.130">
    <property type="match status" value="1"/>
</dbReference>
<dbReference type="Gene3D" id="3.10.310.40">
    <property type="match status" value="1"/>
</dbReference>
<dbReference type="Gene3D" id="3.30.54.20">
    <property type="match status" value="1"/>
</dbReference>
<dbReference type="Gene3D" id="3.30.930.10">
    <property type="entry name" value="Bira Bifunctional Protein, Domain 2"/>
    <property type="match status" value="1"/>
</dbReference>
<dbReference type="Gene3D" id="3.30.980.10">
    <property type="entry name" value="Threonyl-trna Synthetase, Chain A, domain 2"/>
    <property type="match status" value="1"/>
</dbReference>
<dbReference type="HAMAP" id="MF_00036_B">
    <property type="entry name" value="Ala_tRNA_synth_B"/>
    <property type="match status" value="1"/>
</dbReference>
<dbReference type="InterPro" id="IPR045864">
    <property type="entry name" value="aa-tRNA-synth_II/BPL/LPL"/>
</dbReference>
<dbReference type="InterPro" id="IPR002318">
    <property type="entry name" value="Ala-tRNA-lgiase_IIc"/>
</dbReference>
<dbReference type="InterPro" id="IPR018162">
    <property type="entry name" value="Ala-tRNA-ligase_IIc_anticod-bd"/>
</dbReference>
<dbReference type="InterPro" id="IPR018165">
    <property type="entry name" value="Ala-tRNA-synth_IIc_core"/>
</dbReference>
<dbReference type="InterPro" id="IPR018164">
    <property type="entry name" value="Ala-tRNA-synth_IIc_N"/>
</dbReference>
<dbReference type="InterPro" id="IPR050058">
    <property type="entry name" value="Ala-tRNA_ligase"/>
</dbReference>
<dbReference type="InterPro" id="IPR023033">
    <property type="entry name" value="Ala_tRNA_ligase_euk/bac"/>
</dbReference>
<dbReference type="InterPro" id="IPR003156">
    <property type="entry name" value="DHHA1_dom"/>
</dbReference>
<dbReference type="InterPro" id="IPR018163">
    <property type="entry name" value="Thr/Ala-tRNA-synth_IIc_edit"/>
</dbReference>
<dbReference type="InterPro" id="IPR009000">
    <property type="entry name" value="Transl_B-barrel_sf"/>
</dbReference>
<dbReference type="InterPro" id="IPR012947">
    <property type="entry name" value="tRNA_SAD"/>
</dbReference>
<dbReference type="NCBIfam" id="TIGR00344">
    <property type="entry name" value="alaS"/>
    <property type="match status" value="1"/>
</dbReference>
<dbReference type="PANTHER" id="PTHR11777:SF9">
    <property type="entry name" value="ALANINE--TRNA LIGASE, CYTOPLASMIC"/>
    <property type="match status" value="1"/>
</dbReference>
<dbReference type="PANTHER" id="PTHR11777">
    <property type="entry name" value="ALANYL-TRNA SYNTHETASE"/>
    <property type="match status" value="1"/>
</dbReference>
<dbReference type="Pfam" id="PF02272">
    <property type="entry name" value="DHHA1"/>
    <property type="match status" value="1"/>
</dbReference>
<dbReference type="Pfam" id="PF01411">
    <property type="entry name" value="tRNA-synt_2c"/>
    <property type="match status" value="2"/>
</dbReference>
<dbReference type="Pfam" id="PF07973">
    <property type="entry name" value="tRNA_SAD"/>
    <property type="match status" value="1"/>
</dbReference>
<dbReference type="PRINTS" id="PR00980">
    <property type="entry name" value="TRNASYNTHALA"/>
</dbReference>
<dbReference type="SMART" id="SM00863">
    <property type="entry name" value="tRNA_SAD"/>
    <property type="match status" value="1"/>
</dbReference>
<dbReference type="SUPFAM" id="SSF55681">
    <property type="entry name" value="Class II aaRS and biotin synthetases"/>
    <property type="match status" value="1"/>
</dbReference>
<dbReference type="SUPFAM" id="SSF101353">
    <property type="entry name" value="Putative anticodon-binding domain of alanyl-tRNA synthetase (AlaRS)"/>
    <property type="match status" value="1"/>
</dbReference>
<dbReference type="SUPFAM" id="SSF55186">
    <property type="entry name" value="ThrRS/AlaRS common domain"/>
    <property type="match status" value="1"/>
</dbReference>
<dbReference type="SUPFAM" id="SSF50447">
    <property type="entry name" value="Translation proteins"/>
    <property type="match status" value="1"/>
</dbReference>
<dbReference type="PROSITE" id="PS50860">
    <property type="entry name" value="AA_TRNA_LIGASE_II_ALA"/>
    <property type="match status" value="1"/>
</dbReference>
<feature type="chain" id="PRO_0000075155" description="Alanine--tRNA ligase">
    <location>
        <begin position="1"/>
        <end position="930"/>
    </location>
</feature>
<feature type="binding site" evidence="1">
    <location>
        <position position="595"/>
    </location>
    <ligand>
        <name>Zn(2+)</name>
        <dbReference type="ChEBI" id="CHEBI:29105"/>
    </ligand>
</feature>
<feature type="binding site" evidence="1">
    <location>
        <position position="599"/>
    </location>
    <ligand>
        <name>Zn(2+)</name>
        <dbReference type="ChEBI" id="CHEBI:29105"/>
    </ligand>
</feature>
<feature type="binding site" evidence="1">
    <location>
        <position position="700"/>
    </location>
    <ligand>
        <name>Zn(2+)</name>
        <dbReference type="ChEBI" id="CHEBI:29105"/>
    </ligand>
</feature>
<feature type="binding site" evidence="1">
    <location>
        <position position="704"/>
    </location>
    <ligand>
        <name>Zn(2+)</name>
        <dbReference type="ChEBI" id="CHEBI:29105"/>
    </ligand>
</feature>
<keyword id="KW-0030">Aminoacyl-tRNA synthetase</keyword>
<keyword id="KW-0067">ATP-binding</keyword>
<keyword id="KW-0963">Cytoplasm</keyword>
<keyword id="KW-0436">Ligase</keyword>
<keyword id="KW-0479">Metal-binding</keyword>
<keyword id="KW-0547">Nucleotide-binding</keyword>
<keyword id="KW-0648">Protein biosynthesis</keyword>
<keyword id="KW-1185">Reference proteome</keyword>
<keyword id="KW-0694">RNA-binding</keyword>
<keyword id="KW-0820">tRNA-binding</keyword>
<keyword id="KW-0862">Zinc</keyword>
<comment type="function">
    <text evidence="1">Catalyzes the attachment of alanine to tRNA(Ala) in a two-step reaction: alanine is first activated by ATP to form Ala-AMP and then transferred to the acceptor end of tRNA(Ala). Also edits incorrectly charged Ser-tRNA(Ala) and Gly-tRNA(Ala) via its editing domain.</text>
</comment>
<comment type="catalytic activity">
    <reaction evidence="1">
        <text>tRNA(Ala) + L-alanine + ATP = L-alanyl-tRNA(Ala) + AMP + diphosphate</text>
        <dbReference type="Rhea" id="RHEA:12540"/>
        <dbReference type="Rhea" id="RHEA-COMP:9657"/>
        <dbReference type="Rhea" id="RHEA-COMP:9923"/>
        <dbReference type="ChEBI" id="CHEBI:30616"/>
        <dbReference type="ChEBI" id="CHEBI:33019"/>
        <dbReference type="ChEBI" id="CHEBI:57972"/>
        <dbReference type="ChEBI" id="CHEBI:78442"/>
        <dbReference type="ChEBI" id="CHEBI:78497"/>
        <dbReference type="ChEBI" id="CHEBI:456215"/>
        <dbReference type="EC" id="6.1.1.7"/>
    </reaction>
</comment>
<comment type="cofactor">
    <cofactor evidence="1">
        <name>Zn(2+)</name>
        <dbReference type="ChEBI" id="CHEBI:29105"/>
    </cofactor>
    <text evidence="1">Binds 1 zinc ion per subunit.</text>
</comment>
<comment type="subcellular location">
    <subcellularLocation>
        <location evidence="1">Cytoplasm</location>
    </subcellularLocation>
</comment>
<comment type="domain">
    <text evidence="1">Consists of three domains; the N-terminal catalytic domain, the editing domain and the C-terminal C-Ala domain. The editing domain removes incorrectly charged amino acids, while the C-Ala domain, along with tRNA(Ala), serves as a bridge to cooperatively bring together the editing and aminoacylation centers thus stimulating deacylation of misacylated tRNAs.</text>
</comment>
<comment type="similarity">
    <text evidence="1">Belongs to the class-II aminoacyl-tRNA synthetase family.</text>
</comment>
<name>SYA_MALP2</name>
<protein>
    <recommendedName>
        <fullName evidence="1">Alanine--tRNA ligase</fullName>
        <ecNumber evidence="1">6.1.1.7</ecNumber>
    </recommendedName>
    <alternativeName>
        <fullName evidence="1">Alanyl-tRNA synthetase</fullName>
        <shortName evidence="1">AlaRS</shortName>
    </alternativeName>
</protein>